<name>RS25_SOLLC</name>
<dbReference type="EMBL" id="X76714">
    <property type="protein sequence ID" value="CAA54132.1"/>
    <property type="molecule type" value="mRNA"/>
</dbReference>
<dbReference type="PIR" id="S40089">
    <property type="entry name" value="S40089"/>
</dbReference>
<dbReference type="RefSeq" id="NP_001234180.1">
    <property type="nucleotide sequence ID" value="NM_001247251.2"/>
</dbReference>
<dbReference type="SMR" id="P46301"/>
<dbReference type="STRING" id="4081.P46301"/>
<dbReference type="PaxDb" id="4081-Solyc10g052660.1.1"/>
<dbReference type="GeneID" id="544096"/>
<dbReference type="KEGG" id="sly:544096"/>
<dbReference type="eggNOG" id="KOG1767">
    <property type="taxonomic scope" value="Eukaryota"/>
</dbReference>
<dbReference type="HOGENOM" id="CLU_129470_0_1_1"/>
<dbReference type="InParanoid" id="P46301"/>
<dbReference type="OrthoDB" id="10263513at2759"/>
<dbReference type="PhylomeDB" id="P46301"/>
<dbReference type="Proteomes" id="UP000004994">
    <property type="component" value="Unplaced"/>
</dbReference>
<dbReference type="ExpressionAtlas" id="P46301">
    <property type="expression patterns" value="baseline and differential"/>
</dbReference>
<dbReference type="GO" id="GO:0022627">
    <property type="term" value="C:cytosolic small ribosomal subunit"/>
    <property type="evidence" value="ECO:0000318"/>
    <property type="project" value="GO_Central"/>
</dbReference>
<dbReference type="GO" id="GO:0003735">
    <property type="term" value="F:structural constituent of ribosome"/>
    <property type="evidence" value="ECO:0000318"/>
    <property type="project" value="GO_Central"/>
</dbReference>
<dbReference type="FunFam" id="3.30.63.20:FF:000001">
    <property type="entry name" value="40S ribosomal protein S25"/>
    <property type="match status" value="1"/>
</dbReference>
<dbReference type="Gene3D" id="3.30.63.20">
    <property type="match status" value="1"/>
</dbReference>
<dbReference type="InterPro" id="IPR004977">
    <property type="entry name" value="Ribosomal_eS25"/>
</dbReference>
<dbReference type="PANTHER" id="PTHR12850">
    <property type="entry name" value="40S RIBOSOMAL PROTEIN S25"/>
    <property type="match status" value="1"/>
</dbReference>
<dbReference type="Pfam" id="PF03297">
    <property type="entry name" value="Ribosomal_S25"/>
    <property type="match status" value="1"/>
</dbReference>
<organism>
    <name type="scientific">Solanum lycopersicum</name>
    <name type="common">Tomato</name>
    <name type="synonym">Lycopersicon esculentum</name>
    <dbReference type="NCBI Taxonomy" id="4081"/>
    <lineage>
        <taxon>Eukaryota</taxon>
        <taxon>Viridiplantae</taxon>
        <taxon>Streptophyta</taxon>
        <taxon>Embryophyta</taxon>
        <taxon>Tracheophyta</taxon>
        <taxon>Spermatophyta</taxon>
        <taxon>Magnoliopsida</taxon>
        <taxon>eudicotyledons</taxon>
        <taxon>Gunneridae</taxon>
        <taxon>Pentapetalae</taxon>
        <taxon>asterids</taxon>
        <taxon>lamiids</taxon>
        <taxon>Solanales</taxon>
        <taxon>Solanaceae</taxon>
        <taxon>Solanoideae</taxon>
        <taxon>Solaneae</taxon>
        <taxon>Solanum</taxon>
        <taxon>Solanum subgen. Lycopersicon</taxon>
    </lineage>
</organism>
<accession>P46301</accession>
<protein>
    <recommendedName>
        <fullName evidence="2">Small ribosomal subunit protein eS25</fullName>
    </recommendedName>
    <alternativeName>
        <fullName>40S ribosomal protein S25</fullName>
    </alternativeName>
</protein>
<sequence>MAPKKAQAPPPSSKPAKSGGGKQKKKKWSKGKQKEKVNNMVLFDKSTYDKLLSEAPKYKLITPSVLSDRLRISGSLARKAIRDLMARGSIRMVSAHASQQIYTRATNT</sequence>
<proteinExistence type="inferred from homology"/>
<gene>
    <name type="primary">RPS25</name>
</gene>
<reference key="1">
    <citation type="journal article" date="1995" name="Physiol. Veg.">
        <title>A tomato cDNA encodes a protein homologous to the eukaryotic ribosomal protein S25.</title>
        <authorList>
            <person name="Werner R."/>
            <person name="Guitton M.C."/>
            <person name="Muehlbach H.P."/>
        </authorList>
    </citation>
    <scope>NUCLEOTIDE SEQUENCE [MRNA]</scope>
    <source>
        <strain>cv. Rutgers</strain>
        <tissue>Leaf</tissue>
    </source>
</reference>
<comment type="similarity">
    <text evidence="2">Belongs to the eukaryotic ribosomal protein eS25 family.</text>
</comment>
<feature type="chain" id="PRO_0000192884" description="Small ribosomal subunit protein eS25">
    <location>
        <begin position="1"/>
        <end position="108"/>
    </location>
</feature>
<feature type="region of interest" description="Disordered" evidence="1">
    <location>
        <begin position="1"/>
        <end position="36"/>
    </location>
</feature>
<feature type="compositionally biased region" description="Basic residues" evidence="1">
    <location>
        <begin position="22"/>
        <end position="31"/>
    </location>
</feature>
<keyword id="KW-1185">Reference proteome</keyword>
<keyword id="KW-0687">Ribonucleoprotein</keyword>
<keyword id="KW-0689">Ribosomal protein</keyword>
<evidence type="ECO:0000256" key="1">
    <source>
        <dbReference type="SAM" id="MobiDB-lite"/>
    </source>
</evidence>
<evidence type="ECO:0000305" key="2"/>